<gene>
    <name type="primary">HBB</name>
</gene>
<comment type="function">
    <text>Involved in oxygen transport from the lung to the various peripheral tissues.</text>
</comment>
<comment type="subunit">
    <text>Heterotetramer of two alpha chains and two beta chains.</text>
</comment>
<comment type="tissue specificity">
    <text>Red blood cells.</text>
</comment>
<comment type="similarity">
    <text evidence="3">Belongs to the globin family.</text>
</comment>
<proteinExistence type="evidence at protein level"/>
<feature type="chain" id="PRO_0000053074" description="Hemoglobin subunit beta">
    <location>
        <begin position="1"/>
        <end position="146"/>
    </location>
</feature>
<feature type="domain" description="Globin" evidence="3">
    <location>
        <begin position="2"/>
        <end position="146"/>
    </location>
</feature>
<feature type="binding site" description="distal binding residue">
    <location>
        <position position="63"/>
    </location>
    <ligand>
        <name>heme b</name>
        <dbReference type="ChEBI" id="CHEBI:60344"/>
    </ligand>
    <ligandPart>
        <name>Fe</name>
        <dbReference type="ChEBI" id="CHEBI:18248"/>
    </ligandPart>
</feature>
<feature type="binding site" description="proximal binding residue">
    <location>
        <position position="92"/>
    </location>
    <ligand>
        <name>heme b</name>
        <dbReference type="ChEBI" id="CHEBI:60344"/>
    </ligand>
    <ligandPart>
        <name>Fe</name>
        <dbReference type="ChEBI" id="CHEBI:18248"/>
    </ligandPart>
</feature>
<feature type="modified residue" description="N-acetylvaline" evidence="1">
    <location>
        <position position="1"/>
    </location>
</feature>
<feature type="modified residue" description="Phosphothreonine" evidence="2">
    <location>
        <position position="12"/>
    </location>
</feature>
<feature type="modified residue" description="N6-acetyllysine" evidence="2">
    <location>
        <position position="59"/>
    </location>
</feature>
<feature type="modified residue" description="N6-acetyllysine" evidence="2">
    <location>
        <position position="82"/>
    </location>
</feature>
<feature type="modified residue" description="S-nitrosocysteine" evidence="2">
    <location>
        <position position="93"/>
    </location>
</feature>
<feature type="modified residue" description="N6-acetyllysine" evidence="2">
    <location>
        <position position="144"/>
    </location>
</feature>
<organism>
    <name type="scientific">Potorous tridactylus</name>
    <name type="common">Potoroo</name>
    <dbReference type="NCBI Taxonomy" id="9310"/>
    <lineage>
        <taxon>Eukaryota</taxon>
        <taxon>Metazoa</taxon>
        <taxon>Chordata</taxon>
        <taxon>Craniata</taxon>
        <taxon>Vertebrata</taxon>
        <taxon>Euteleostomi</taxon>
        <taxon>Mammalia</taxon>
        <taxon>Metatheria</taxon>
        <taxon>Diprotodontia</taxon>
        <taxon>Potoroidae</taxon>
        <taxon>Potorous</taxon>
    </lineage>
</organism>
<keyword id="KW-0007">Acetylation</keyword>
<keyword id="KW-0903">Direct protein sequencing</keyword>
<keyword id="KW-0349">Heme</keyword>
<keyword id="KW-0408">Iron</keyword>
<keyword id="KW-0479">Metal-binding</keyword>
<keyword id="KW-0561">Oxygen transport</keyword>
<keyword id="KW-0597">Phosphoprotein</keyword>
<keyword id="KW-0702">S-nitrosylation</keyword>
<keyword id="KW-0813">Transport</keyword>
<reference key="1">
    <citation type="journal article" date="1971" name="Aust. J. Biol. Sci.">
        <title>Studies on marsupial proteins. VI. Evolutionary changes of beta-globins of the macropodidae and the amino acid sequence of beta-globin from Potorous tridactylus.</title>
        <authorList>
            <person name="Thompson E.O.P."/>
            <person name="Air G.M."/>
        </authorList>
    </citation>
    <scope>PROTEIN SEQUENCE</scope>
</reference>
<name>HBB_POTTR</name>
<dbReference type="PIR" id="A02428">
    <property type="entry name" value="HBPT"/>
</dbReference>
<dbReference type="SMR" id="P02108"/>
<dbReference type="GO" id="GO:0072562">
    <property type="term" value="C:blood microparticle"/>
    <property type="evidence" value="ECO:0007669"/>
    <property type="project" value="TreeGrafter"/>
</dbReference>
<dbReference type="GO" id="GO:0031838">
    <property type="term" value="C:haptoglobin-hemoglobin complex"/>
    <property type="evidence" value="ECO:0007669"/>
    <property type="project" value="TreeGrafter"/>
</dbReference>
<dbReference type="GO" id="GO:0005833">
    <property type="term" value="C:hemoglobin complex"/>
    <property type="evidence" value="ECO:0007669"/>
    <property type="project" value="InterPro"/>
</dbReference>
<dbReference type="GO" id="GO:0031720">
    <property type="term" value="F:haptoglobin binding"/>
    <property type="evidence" value="ECO:0007669"/>
    <property type="project" value="TreeGrafter"/>
</dbReference>
<dbReference type="GO" id="GO:0020037">
    <property type="term" value="F:heme binding"/>
    <property type="evidence" value="ECO:0007669"/>
    <property type="project" value="InterPro"/>
</dbReference>
<dbReference type="GO" id="GO:0046872">
    <property type="term" value="F:metal ion binding"/>
    <property type="evidence" value="ECO:0007669"/>
    <property type="project" value="UniProtKB-KW"/>
</dbReference>
<dbReference type="GO" id="GO:0043177">
    <property type="term" value="F:organic acid binding"/>
    <property type="evidence" value="ECO:0007669"/>
    <property type="project" value="TreeGrafter"/>
</dbReference>
<dbReference type="GO" id="GO:0019825">
    <property type="term" value="F:oxygen binding"/>
    <property type="evidence" value="ECO:0007669"/>
    <property type="project" value="InterPro"/>
</dbReference>
<dbReference type="GO" id="GO:0005344">
    <property type="term" value="F:oxygen carrier activity"/>
    <property type="evidence" value="ECO:0007669"/>
    <property type="project" value="UniProtKB-KW"/>
</dbReference>
<dbReference type="GO" id="GO:0004601">
    <property type="term" value="F:peroxidase activity"/>
    <property type="evidence" value="ECO:0007669"/>
    <property type="project" value="TreeGrafter"/>
</dbReference>
<dbReference type="GO" id="GO:0042744">
    <property type="term" value="P:hydrogen peroxide catabolic process"/>
    <property type="evidence" value="ECO:0007669"/>
    <property type="project" value="TreeGrafter"/>
</dbReference>
<dbReference type="CDD" id="cd08925">
    <property type="entry name" value="Hb-beta-like"/>
    <property type="match status" value="1"/>
</dbReference>
<dbReference type="FunFam" id="1.10.490.10:FF:000001">
    <property type="entry name" value="Hemoglobin subunit beta"/>
    <property type="match status" value="1"/>
</dbReference>
<dbReference type="Gene3D" id="1.10.490.10">
    <property type="entry name" value="Globins"/>
    <property type="match status" value="1"/>
</dbReference>
<dbReference type="InterPro" id="IPR000971">
    <property type="entry name" value="Globin"/>
</dbReference>
<dbReference type="InterPro" id="IPR009050">
    <property type="entry name" value="Globin-like_sf"/>
</dbReference>
<dbReference type="InterPro" id="IPR012292">
    <property type="entry name" value="Globin/Proto"/>
</dbReference>
<dbReference type="InterPro" id="IPR002337">
    <property type="entry name" value="Hemoglobin_b"/>
</dbReference>
<dbReference type="InterPro" id="IPR050056">
    <property type="entry name" value="Hemoglobin_oxygen_transport"/>
</dbReference>
<dbReference type="PANTHER" id="PTHR11442">
    <property type="entry name" value="HEMOGLOBIN FAMILY MEMBER"/>
    <property type="match status" value="1"/>
</dbReference>
<dbReference type="PANTHER" id="PTHR11442:SF7">
    <property type="entry name" value="HEMOGLOBIN SUBUNIT EPSILON"/>
    <property type="match status" value="1"/>
</dbReference>
<dbReference type="Pfam" id="PF00042">
    <property type="entry name" value="Globin"/>
    <property type="match status" value="1"/>
</dbReference>
<dbReference type="PRINTS" id="PR00814">
    <property type="entry name" value="BETAHAEM"/>
</dbReference>
<dbReference type="SUPFAM" id="SSF46458">
    <property type="entry name" value="Globin-like"/>
    <property type="match status" value="1"/>
</dbReference>
<dbReference type="PROSITE" id="PS01033">
    <property type="entry name" value="GLOBIN"/>
    <property type="match status" value="1"/>
</dbReference>
<evidence type="ECO:0000250" key="1">
    <source>
        <dbReference type="UniProtKB" id="P02086"/>
    </source>
</evidence>
<evidence type="ECO:0000250" key="2">
    <source>
        <dbReference type="UniProtKB" id="P68871"/>
    </source>
</evidence>
<evidence type="ECO:0000255" key="3">
    <source>
        <dbReference type="PROSITE-ProRule" id="PRU00238"/>
    </source>
</evidence>
<accession>P02108</accession>
<protein>
    <recommendedName>
        <fullName>Hemoglobin subunit beta</fullName>
    </recommendedName>
    <alternativeName>
        <fullName>Beta-globin</fullName>
    </alternativeName>
    <alternativeName>
        <fullName>Hemoglobin beta chain</fullName>
    </alternativeName>
</protein>
<sequence length="146" mass="15933">VHLSSEEKGLITSLWGKIDIEQTGGEALGRLLIVYPWTSRFFDHFGDLSSAKAVLGNAKVLAHGAKVLVSFGDAIKNLDNLKGTFAKLSELHCDKLHVDPENFKLLGNVLVICLAEHFGKDFTIDAQVAWQKLVAGVANALAHKYH</sequence>